<feature type="chain" id="PRO_0000258632" description="Large ribosomal subunit protein bL35">
    <location>
        <begin position="1"/>
        <end position="66"/>
    </location>
</feature>
<feature type="region of interest" description="Disordered" evidence="2">
    <location>
        <begin position="19"/>
        <end position="45"/>
    </location>
</feature>
<feature type="compositionally biased region" description="Basic residues" evidence="2">
    <location>
        <begin position="28"/>
        <end position="45"/>
    </location>
</feature>
<sequence length="66" mass="7294">MPKLKTKSSAKKRFKITASGKVVAAQSTKRHGMTKRSKRSLRTRRGTALMSAADTRIVAPFMPYGL</sequence>
<dbReference type="EMBL" id="CP000235">
    <property type="protein sequence ID" value="ABD43728.1"/>
    <property type="molecule type" value="Genomic_DNA"/>
</dbReference>
<dbReference type="RefSeq" id="WP_011450220.1">
    <property type="nucleotide sequence ID" value="NC_007797.1"/>
</dbReference>
<dbReference type="SMR" id="Q2GLQ7"/>
<dbReference type="STRING" id="212042.APH_0061"/>
<dbReference type="PaxDb" id="212042-APH_0061"/>
<dbReference type="EnsemblBacteria" id="ABD43728">
    <property type="protein sequence ID" value="ABD43728"/>
    <property type="gene ID" value="APH_0061"/>
</dbReference>
<dbReference type="GeneID" id="92747686"/>
<dbReference type="KEGG" id="aph:APH_0061"/>
<dbReference type="eggNOG" id="COG0291">
    <property type="taxonomic scope" value="Bacteria"/>
</dbReference>
<dbReference type="HOGENOM" id="CLU_169643_2_1_5"/>
<dbReference type="Proteomes" id="UP000001943">
    <property type="component" value="Chromosome"/>
</dbReference>
<dbReference type="GO" id="GO:1990904">
    <property type="term" value="C:ribonucleoprotein complex"/>
    <property type="evidence" value="ECO:0007669"/>
    <property type="project" value="UniProtKB-KW"/>
</dbReference>
<dbReference type="GO" id="GO:0005840">
    <property type="term" value="C:ribosome"/>
    <property type="evidence" value="ECO:0007669"/>
    <property type="project" value="UniProtKB-KW"/>
</dbReference>
<dbReference type="GO" id="GO:0003735">
    <property type="term" value="F:structural constituent of ribosome"/>
    <property type="evidence" value="ECO:0007669"/>
    <property type="project" value="InterPro"/>
</dbReference>
<dbReference type="GO" id="GO:0006412">
    <property type="term" value="P:translation"/>
    <property type="evidence" value="ECO:0007669"/>
    <property type="project" value="UniProtKB-UniRule"/>
</dbReference>
<dbReference type="FunFam" id="4.10.410.60:FF:000001">
    <property type="entry name" value="50S ribosomal protein L35"/>
    <property type="match status" value="1"/>
</dbReference>
<dbReference type="Gene3D" id="4.10.410.60">
    <property type="match status" value="1"/>
</dbReference>
<dbReference type="HAMAP" id="MF_00514">
    <property type="entry name" value="Ribosomal_bL35"/>
    <property type="match status" value="1"/>
</dbReference>
<dbReference type="InterPro" id="IPR001706">
    <property type="entry name" value="Ribosomal_bL35"/>
</dbReference>
<dbReference type="InterPro" id="IPR021137">
    <property type="entry name" value="Ribosomal_bL35-like"/>
</dbReference>
<dbReference type="InterPro" id="IPR018265">
    <property type="entry name" value="Ribosomal_bL35_CS"/>
</dbReference>
<dbReference type="InterPro" id="IPR037229">
    <property type="entry name" value="Ribosomal_bL35_sf"/>
</dbReference>
<dbReference type="NCBIfam" id="TIGR00001">
    <property type="entry name" value="rpmI_bact"/>
    <property type="match status" value="1"/>
</dbReference>
<dbReference type="Pfam" id="PF01632">
    <property type="entry name" value="Ribosomal_L35p"/>
    <property type="match status" value="1"/>
</dbReference>
<dbReference type="PRINTS" id="PR00064">
    <property type="entry name" value="RIBOSOMALL35"/>
</dbReference>
<dbReference type="SUPFAM" id="SSF143034">
    <property type="entry name" value="L35p-like"/>
    <property type="match status" value="1"/>
</dbReference>
<dbReference type="PROSITE" id="PS00936">
    <property type="entry name" value="RIBOSOMAL_L35"/>
    <property type="match status" value="1"/>
</dbReference>
<keyword id="KW-0687">Ribonucleoprotein</keyword>
<keyword id="KW-0689">Ribosomal protein</keyword>
<protein>
    <recommendedName>
        <fullName evidence="1">Large ribosomal subunit protein bL35</fullName>
    </recommendedName>
    <alternativeName>
        <fullName evidence="3">50S ribosomal protein L35</fullName>
    </alternativeName>
</protein>
<accession>Q2GLQ7</accession>
<proteinExistence type="inferred from homology"/>
<comment type="similarity">
    <text evidence="1">Belongs to the bacterial ribosomal protein bL35 family.</text>
</comment>
<name>RL35_ANAPZ</name>
<gene>
    <name evidence="1" type="primary">rpmI</name>
    <name type="ordered locus">APH_0061</name>
</gene>
<reference key="1">
    <citation type="journal article" date="2006" name="PLoS Genet.">
        <title>Comparative genomics of emerging human ehrlichiosis agents.</title>
        <authorList>
            <person name="Dunning Hotopp J.C."/>
            <person name="Lin M."/>
            <person name="Madupu R."/>
            <person name="Crabtree J."/>
            <person name="Angiuoli S.V."/>
            <person name="Eisen J.A."/>
            <person name="Seshadri R."/>
            <person name="Ren Q."/>
            <person name="Wu M."/>
            <person name="Utterback T.R."/>
            <person name="Smith S."/>
            <person name="Lewis M."/>
            <person name="Khouri H."/>
            <person name="Zhang C."/>
            <person name="Niu H."/>
            <person name="Lin Q."/>
            <person name="Ohashi N."/>
            <person name="Zhi N."/>
            <person name="Nelson W.C."/>
            <person name="Brinkac L.M."/>
            <person name="Dodson R.J."/>
            <person name="Rosovitz M.J."/>
            <person name="Sundaram J.P."/>
            <person name="Daugherty S.C."/>
            <person name="Davidsen T."/>
            <person name="Durkin A.S."/>
            <person name="Gwinn M.L."/>
            <person name="Haft D.H."/>
            <person name="Selengut J.D."/>
            <person name="Sullivan S.A."/>
            <person name="Zafar N."/>
            <person name="Zhou L."/>
            <person name="Benahmed F."/>
            <person name="Forberger H."/>
            <person name="Halpin R."/>
            <person name="Mulligan S."/>
            <person name="Robinson J."/>
            <person name="White O."/>
            <person name="Rikihisa Y."/>
            <person name="Tettelin H."/>
        </authorList>
    </citation>
    <scope>NUCLEOTIDE SEQUENCE [LARGE SCALE GENOMIC DNA]</scope>
    <source>
        <strain>HZ</strain>
    </source>
</reference>
<organism>
    <name type="scientific">Anaplasma phagocytophilum (strain HZ)</name>
    <dbReference type="NCBI Taxonomy" id="212042"/>
    <lineage>
        <taxon>Bacteria</taxon>
        <taxon>Pseudomonadati</taxon>
        <taxon>Pseudomonadota</taxon>
        <taxon>Alphaproteobacteria</taxon>
        <taxon>Rickettsiales</taxon>
        <taxon>Anaplasmataceae</taxon>
        <taxon>Anaplasma</taxon>
        <taxon>phagocytophilum group</taxon>
    </lineage>
</organism>
<evidence type="ECO:0000255" key="1">
    <source>
        <dbReference type="HAMAP-Rule" id="MF_00514"/>
    </source>
</evidence>
<evidence type="ECO:0000256" key="2">
    <source>
        <dbReference type="SAM" id="MobiDB-lite"/>
    </source>
</evidence>
<evidence type="ECO:0000305" key="3"/>